<sequence length="462" mass="51253">MSHKLLAFPRLNYISNFNFFYKNTTKNLILDQNFIGNLYLTSTPTCRKLVTIPSNRNIMTTSSNLKESDSGSILENVATKVLNCQEPEAKSSQKIDTDKVSSNKVESTHIPFKVVPKELNKSSSATATSSSKTKTNLRSIIQPYVKLTKPNLTILVTLSSICSYAISPYTVSLPELLFLTMGTALCSGAANAINMGREPEFDKKMPRTVGRPVVRGLISPKQAYQFAGITGSLGCTMLFLGVNPTVSFLGFLNIVLYSWIYTSLKRKSIINTWVGAIVGAIPPLMGWAASSPLDHPGAWCLAGLLYAWQFPHFNALSHNIADQYKGAGYVMTAAENPKLNARVALRYSLLMFPLCFGLSYFGITDWVFQFDSAIANSWLTYLAYKFWMQIKQNYTGQKPTANGIAMANIHAKKLFWGSVWHLPAVLILAMLHKKGQWDRLLIYSGLKSHDHKSQSSNNIGLI</sequence>
<keyword id="KW-0350">Heme biosynthesis</keyword>
<keyword id="KW-0472">Membrane</keyword>
<keyword id="KW-0496">Mitochondrion</keyword>
<keyword id="KW-1185">Reference proteome</keyword>
<keyword id="KW-0808">Transferase</keyword>
<keyword id="KW-0809">Transit peptide</keyword>
<keyword id="KW-0812">Transmembrane</keyword>
<keyword id="KW-1133">Transmembrane helix</keyword>
<feature type="transit peptide" description="Mitochondrion" evidence="2">
    <location>
        <begin position="1"/>
        <end status="unknown"/>
    </location>
</feature>
<feature type="chain" id="PRO_0000045414" description="Protoheme IX farnesyltransferase, mitochondrial">
    <location>
        <begin status="unknown"/>
        <end position="462"/>
    </location>
</feature>
<feature type="transmembrane region" description="Helical" evidence="2">
    <location>
        <begin position="152"/>
        <end position="172"/>
    </location>
</feature>
<feature type="transmembrane region" description="Helical" evidence="2">
    <location>
        <begin position="173"/>
        <end position="193"/>
    </location>
</feature>
<feature type="transmembrane region" description="Helical" evidence="2">
    <location>
        <begin position="237"/>
        <end position="257"/>
    </location>
</feature>
<feature type="transmembrane region" description="Helical" evidence="2">
    <location>
        <begin position="269"/>
        <end position="289"/>
    </location>
</feature>
<feature type="transmembrane region" description="Helical" evidence="2">
    <location>
        <begin position="296"/>
        <end position="316"/>
    </location>
</feature>
<feature type="transmembrane region" description="Helical" evidence="2">
    <location>
        <begin position="348"/>
        <end position="368"/>
    </location>
</feature>
<feature type="transmembrane region" description="Helical" evidence="2">
    <location>
        <begin position="411"/>
        <end position="431"/>
    </location>
</feature>
<accession>Q6BKW6</accession>
<organism>
    <name type="scientific">Debaryomyces hansenii (strain ATCC 36239 / CBS 767 / BCRC 21394 / JCM 1990 / NBRC 0083 / IGC 2968)</name>
    <name type="common">Yeast</name>
    <name type="synonym">Torulaspora hansenii</name>
    <dbReference type="NCBI Taxonomy" id="284592"/>
    <lineage>
        <taxon>Eukaryota</taxon>
        <taxon>Fungi</taxon>
        <taxon>Dikarya</taxon>
        <taxon>Ascomycota</taxon>
        <taxon>Saccharomycotina</taxon>
        <taxon>Pichiomycetes</taxon>
        <taxon>Debaryomycetaceae</taxon>
        <taxon>Debaryomyces</taxon>
    </lineage>
</organism>
<protein>
    <recommendedName>
        <fullName>Protoheme IX farnesyltransferase, mitochondrial</fullName>
        <ecNumber>2.5.1.-</ecNumber>
    </recommendedName>
    <alternativeName>
        <fullName>Heme O synthase</fullName>
    </alternativeName>
</protein>
<evidence type="ECO:0000250" key="1"/>
<evidence type="ECO:0000255" key="2"/>
<evidence type="ECO:0000305" key="3"/>
<comment type="function">
    <text evidence="1">Converts protoheme IX and farnesyl diphosphate to heme O.</text>
</comment>
<comment type="subcellular location">
    <subcellularLocation>
        <location evidence="1">Mitochondrion membrane</location>
        <topology evidence="1">Multi-pass membrane protein</topology>
    </subcellularLocation>
</comment>
<comment type="similarity">
    <text evidence="3">Belongs to the UbiA prenyltransferase family.</text>
</comment>
<name>COX10_DEBHA</name>
<dbReference type="EC" id="2.5.1.-"/>
<dbReference type="EMBL" id="CR382138">
    <property type="protein sequence ID" value="CAG89538.2"/>
    <property type="molecule type" value="Genomic_DNA"/>
</dbReference>
<dbReference type="RefSeq" id="XP_461155.2">
    <property type="nucleotide sequence ID" value="XM_461155.1"/>
</dbReference>
<dbReference type="SMR" id="Q6BKW6"/>
<dbReference type="FunCoup" id="Q6BKW6">
    <property type="interactions" value="852"/>
</dbReference>
<dbReference type="STRING" id="284592.Q6BKW6"/>
<dbReference type="GeneID" id="2904317"/>
<dbReference type="KEGG" id="dha:DEHA2F18634g"/>
<dbReference type="VEuPathDB" id="FungiDB:DEHA2F18634g"/>
<dbReference type="eggNOG" id="KOG1380">
    <property type="taxonomic scope" value="Eukaryota"/>
</dbReference>
<dbReference type="HOGENOM" id="CLU_029631_2_1_1"/>
<dbReference type="InParanoid" id="Q6BKW6"/>
<dbReference type="OMA" id="TKPGIIM"/>
<dbReference type="OrthoDB" id="5211at2759"/>
<dbReference type="Proteomes" id="UP000000599">
    <property type="component" value="Chromosome F"/>
</dbReference>
<dbReference type="GO" id="GO:0031966">
    <property type="term" value="C:mitochondrial membrane"/>
    <property type="evidence" value="ECO:0007669"/>
    <property type="project" value="UniProtKB-SubCell"/>
</dbReference>
<dbReference type="GO" id="GO:0008495">
    <property type="term" value="F:protoheme IX farnesyltransferase activity"/>
    <property type="evidence" value="ECO:0007669"/>
    <property type="project" value="InterPro"/>
</dbReference>
<dbReference type="GO" id="GO:0006784">
    <property type="term" value="P:heme A biosynthetic process"/>
    <property type="evidence" value="ECO:0007669"/>
    <property type="project" value="EnsemblFungi"/>
</dbReference>
<dbReference type="CDD" id="cd13957">
    <property type="entry name" value="PT_UbiA_Cox10"/>
    <property type="match status" value="1"/>
</dbReference>
<dbReference type="FunFam" id="1.10.357.140:FF:000004">
    <property type="entry name" value="Protoheme IX farnesyltransferase, mitochondrial"/>
    <property type="match status" value="1"/>
</dbReference>
<dbReference type="Gene3D" id="1.10.357.140">
    <property type="entry name" value="UbiA prenyltransferase"/>
    <property type="match status" value="1"/>
</dbReference>
<dbReference type="InterPro" id="IPR006369">
    <property type="entry name" value="Protohaem_IX_farnesylTrfase"/>
</dbReference>
<dbReference type="InterPro" id="IPR016315">
    <property type="entry name" value="Protohaem_IX_farnesylTrfase_mt"/>
</dbReference>
<dbReference type="InterPro" id="IPR000537">
    <property type="entry name" value="UbiA_prenyltransferase"/>
</dbReference>
<dbReference type="InterPro" id="IPR030470">
    <property type="entry name" value="UbiA_prenylTrfase_CS"/>
</dbReference>
<dbReference type="InterPro" id="IPR044878">
    <property type="entry name" value="UbiA_sf"/>
</dbReference>
<dbReference type="NCBIfam" id="TIGR01473">
    <property type="entry name" value="cyoE_ctaB"/>
    <property type="match status" value="1"/>
</dbReference>
<dbReference type="PANTHER" id="PTHR43448">
    <property type="entry name" value="PROTOHEME IX FARNESYLTRANSFERASE, MITOCHONDRIAL"/>
    <property type="match status" value="1"/>
</dbReference>
<dbReference type="PANTHER" id="PTHR43448:SF2">
    <property type="entry name" value="PROTOHEME IX FARNESYLTRANSFERASE, MITOCHONDRIAL"/>
    <property type="match status" value="1"/>
</dbReference>
<dbReference type="Pfam" id="PF01040">
    <property type="entry name" value="UbiA"/>
    <property type="match status" value="1"/>
</dbReference>
<dbReference type="PIRSF" id="PIRSF001773">
    <property type="entry name" value="COX10"/>
    <property type="match status" value="1"/>
</dbReference>
<dbReference type="PROSITE" id="PS00943">
    <property type="entry name" value="UBIA"/>
    <property type="match status" value="1"/>
</dbReference>
<proteinExistence type="inferred from homology"/>
<reference key="1">
    <citation type="journal article" date="2004" name="Nature">
        <title>Genome evolution in yeasts.</title>
        <authorList>
            <person name="Dujon B."/>
            <person name="Sherman D."/>
            <person name="Fischer G."/>
            <person name="Durrens P."/>
            <person name="Casaregola S."/>
            <person name="Lafontaine I."/>
            <person name="de Montigny J."/>
            <person name="Marck C."/>
            <person name="Neuveglise C."/>
            <person name="Talla E."/>
            <person name="Goffard N."/>
            <person name="Frangeul L."/>
            <person name="Aigle M."/>
            <person name="Anthouard V."/>
            <person name="Babour A."/>
            <person name="Barbe V."/>
            <person name="Barnay S."/>
            <person name="Blanchin S."/>
            <person name="Beckerich J.-M."/>
            <person name="Beyne E."/>
            <person name="Bleykasten C."/>
            <person name="Boisrame A."/>
            <person name="Boyer J."/>
            <person name="Cattolico L."/>
            <person name="Confanioleri F."/>
            <person name="de Daruvar A."/>
            <person name="Despons L."/>
            <person name="Fabre E."/>
            <person name="Fairhead C."/>
            <person name="Ferry-Dumazet H."/>
            <person name="Groppi A."/>
            <person name="Hantraye F."/>
            <person name="Hennequin C."/>
            <person name="Jauniaux N."/>
            <person name="Joyet P."/>
            <person name="Kachouri R."/>
            <person name="Kerrest A."/>
            <person name="Koszul R."/>
            <person name="Lemaire M."/>
            <person name="Lesur I."/>
            <person name="Ma L."/>
            <person name="Muller H."/>
            <person name="Nicaud J.-M."/>
            <person name="Nikolski M."/>
            <person name="Oztas S."/>
            <person name="Ozier-Kalogeropoulos O."/>
            <person name="Pellenz S."/>
            <person name="Potier S."/>
            <person name="Richard G.-F."/>
            <person name="Straub M.-L."/>
            <person name="Suleau A."/>
            <person name="Swennen D."/>
            <person name="Tekaia F."/>
            <person name="Wesolowski-Louvel M."/>
            <person name="Westhof E."/>
            <person name="Wirth B."/>
            <person name="Zeniou-Meyer M."/>
            <person name="Zivanovic Y."/>
            <person name="Bolotin-Fukuhara M."/>
            <person name="Thierry A."/>
            <person name="Bouchier C."/>
            <person name="Caudron B."/>
            <person name="Scarpelli C."/>
            <person name="Gaillardin C."/>
            <person name="Weissenbach J."/>
            <person name="Wincker P."/>
            <person name="Souciet J.-L."/>
        </authorList>
    </citation>
    <scope>NUCLEOTIDE SEQUENCE [LARGE SCALE GENOMIC DNA]</scope>
    <source>
        <strain>ATCC 36239 / CBS 767 / BCRC 21394 / JCM 1990 / NBRC 0083 / IGC 2968</strain>
    </source>
</reference>
<gene>
    <name type="primary">COX10</name>
    <name type="ordered locus">DEHA2F18634g</name>
</gene>